<protein>
    <recommendedName>
        <fullName evidence="1">Large ribosomal subunit protein bL32</fullName>
    </recommendedName>
    <alternativeName>
        <fullName evidence="3">50S ribosomal protein L32</fullName>
    </alternativeName>
</protein>
<organism>
    <name type="scientific">Pseudomonas putida (strain W619)</name>
    <dbReference type="NCBI Taxonomy" id="390235"/>
    <lineage>
        <taxon>Bacteria</taxon>
        <taxon>Pseudomonadati</taxon>
        <taxon>Pseudomonadota</taxon>
        <taxon>Gammaproteobacteria</taxon>
        <taxon>Pseudomonadales</taxon>
        <taxon>Pseudomonadaceae</taxon>
        <taxon>Pseudomonas</taxon>
    </lineage>
</organism>
<feature type="chain" id="PRO_1000120162" description="Large ribosomal subunit protein bL32">
    <location>
        <begin position="1"/>
        <end position="60"/>
    </location>
</feature>
<feature type="region of interest" description="Disordered" evidence="2">
    <location>
        <begin position="1"/>
        <end position="44"/>
    </location>
</feature>
<feature type="compositionally biased region" description="Basic and acidic residues" evidence="2">
    <location>
        <begin position="11"/>
        <end position="22"/>
    </location>
</feature>
<comment type="similarity">
    <text evidence="1">Belongs to the bacterial ribosomal protein bL32 family.</text>
</comment>
<name>RL32_PSEPW</name>
<evidence type="ECO:0000255" key="1">
    <source>
        <dbReference type="HAMAP-Rule" id="MF_00340"/>
    </source>
</evidence>
<evidence type="ECO:0000256" key="2">
    <source>
        <dbReference type="SAM" id="MobiDB-lite"/>
    </source>
</evidence>
<evidence type="ECO:0000305" key="3"/>
<sequence>MAVQQNKKSRSARDMRRSHDALSENALSVEKTTGEVHLRHHVSPEGVYRGRKVIDKGADE</sequence>
<keyword id="KW-0687">Ribonucleoprotein</keyword>
<keyword id="KW-0689">Ribosomal protein</keyword>
<dbReference type="EMBL" id="CP000949">
    <property type="protein sequence ID" value="ACA72027.1"/>
    <property type="molecule type" value="Genomic_DNA"/>
</dbReference>
<dbReference type="SMR" id="B1J4Y7"/>
<dbReference type="STRING" id="390235.PputW619_1522"/>
<dbReference type="KEGG" id="ppw:PputW619_1522"/>
<dbReference type="eggNOG" id="COG0333">
    <property type="taxonomic scope" value="Bacteria"/>
</dbReference>
<dbReference type="HOGENOM" id="CLU_129084_2_1_6"/>
<dbReference type="OrthoDB" id="9801927at2"/>
<dbReference type="GO" id="GO:0015934">
    <property type="term" value="C:large ribosomal subunit"/>
    <property type="evidence" value="ECO:0007669"/>
    <property type="project" value="InterPro"/>
</dbReference>
<dbReference type="GO" id="GO:0003735">
    <property type="term" value="F:structural constituent of ribosome"/>
    <property type="evidence" value="ECO:0007669"/>
    <property type="project" value="InterPro"/>
</dbReference>
<dbReference type="GO" id="GO:0006412">
    <property type="term" value="P:translation"/>
    <property type="evidence" value="ECO:0007669"/>
    <property type="project" value="UniProtKB-UniRule"/>
</dbReference>
<dbReference type="HAMAP" id="MF_00340">
    <property type="entry name" value="Ribosomal_bL32"/>
    <property type="match status" value="1"/>
</dbReference>
<dbReference type="InterPro" id="IPR002677">
    <property type="entry name" value="Ribosomal_bL32"/>
</dbReference>
<dbReference type="InterPro" id="IPR044957">
    <property type="entry name" value="Ribosomal_bL32_bact"/>
</dbReference>
<dbReference type="InterPro" id="IPR011332">
    <property type="entry name" value="Ribosomal_zn-bd"/>
</dbReference>
<dbReference type="NCBIfam" id="TIGR01031">
    <property type="entry name" value="rpmF_bact"/>
    <property type="match status" value="1"/>
</dbReference>
<dbReference type="PANTHER" id="PTHR35534">
    <property type="entry name" value="50S RIBOSOMAL PROTEIN L32"/>
    <property type="match status" value="1"/>
</dbReference>
<dbReference type="PANTHER" id="PTHR35534:SF1">
    <property type="entry name" value="LARGE RIBOSOMAL SUBUNIT PROTEIN BL32"/>
    <property type="match status" value="1"/>
</dbReference>
<dbReference type="Pfam" id="PF01783">
    <property type="entry name" value="Ribosomal_L32p"/>
    <property type="match status" value="1"/>
</dbReference>
<dbReference type="SUPFAM" id="SSF57829">
    <property type="entry name" value="Zn-binding ribosomal proteins"/>
    <property type="match status" value="1"/>
</dbReference>
<gene>
    <name evidence="1" type="primary">rpmF</name>
    <name type="ordered locus">PputW619_1522</name>
</gene>
<proteinExistence type="inferred from homology"/>
<accession>B1J4Y7</accession>
<reference key="1">
    <citation type="submission" date="2008-02" db="EMBL/GenBank/DDBJ databases">
        <title>Complete sequence of Pseudomonas putida W619.</title>
        <authorList>
            <person name="Copeland A."/>
            <person name="Lucas S."/>
            <person name="Lapidus A."/>
            <person name="Barry K."/>
            <person name="Detter J.C."/>
            <person name="Glavina del Rio T."/>
            <person name="Dalin E."/>
            <person name="Tice H."/>
            <person name="Pitluck S."/>
            <person name="Chain P."/>
            <person name="Malfatti S."/>
            <person name="Shin M."/>
            <person name="Vergez L."/>
            <person name="Schmutz J."/>
            <person name="Larimer F."/>
            <person name="Land M."/>
            <person name="Hauser L."/>
            <person name="Kyrpides N."/>
            <person name="Kim E."/>
            <person name="Taghavi S."/>
            <person name="Vangronsveld D."/>
            <person name="van der Lelie D."/>
            <person name="Richardson P."/>
        </authorList>
    </citation>
    <scope>NUCLEOTIDE SEQUENCE [LARGE SCALE GENOMIC DNA]</scope>
    <source>
        <strain>W619</strain>
    </source>
</reference>